<feature type="chain" id="PRO_0000332469" description="UDP-N-acetylenolpyruvoylglucosamine reductase">
    <location>
        <begin position="1"/>
        <end position="311"/>
    </location>
</feature>
<feature type="domain" description="FAD-binding PCMH-type" evidence="1">
    <location>
        <begin position="28"/>
        <end position="197"/>
    </location>
</feature>
<feature type="active site" evidence="1">
    <location>
        <position position="177"/>
    </location>
</feature>
<feature type="active site" description="Proton donor" evidence="1">
    <location>
        <position position="226"/>
    </location>
</feature>
<feature type="active site" evidence="1">
    <location>
        <position position="296"/>
    </location>
</feature>
<organism>
    <name type="scientific">Magnetococcus marinus (strain ATCC BAA-1437 / JCM 17883 / MC-1)</name>
    <dbReference type="NCBI Taxonomy" id="156889"/>
    <lineage>
        <taxon>Bacteria</taxon>
        <taxon>Pseudomonadati</taxon>
        <taxon>Pseudomonadota</taxon>
        <taxon>Alphaproteobacteria</taxon>
        <taxon>Magnetococcales</taxon>
        <taxon>Magnetococcaceae</taxon>
        <taxon>Magnetococcus</taxon>
    </lineage>
</organism>
<keyword id="KW-0131">Cell cycle</keyword>
<keyword id="KW-0132">Cell division</keyword>
<keyword id="KW-0133">Cell shape</keyword>
<keyword id="KW-0961">Cell wall biogenesis/degradation</keyword>
<keyword id="KW-0963">Cytoplasm</keyword>
<keyword id="KW-0274">FAD</keyword>
<keyword id="KW-0285">Flavoprotein</keyword>
<keyword id="KW-0521">NADP</keyword>
<keyword id="KW-0560">Oxidoreductase</keyword>
<keyword id="KW-0573">Peptidoglycan synthesis</keyword>
<keyword id="KW-1185">Reference proteome</keyword>
<sequence length="311" mass="33234">MKGSHGPCSDLTVTMLENVPLAPLTTLKIGGNARWLVRPSGVKGLSRYCRTCPGDLPRFILGGGSNLLVDDNGFHGVVVDLTHTLNAIVVEHQDAHGGILRVEAGAATRKTAHVARQNGLAGLAFMAGIPGTIGGALRMNAGAYGCDVKGVLLDAQLMDATGNLHTRNAQELGLAYRHCDLPKGWIFVSARFHLARGESEAIKSQMRDYNHKRTQAQPLRYPSAGSVFRNPAGAAAWQLIDAAGLRGHRIGDAQISEKHSNFFVNLGAASSLHMEELIELARNRVAQHSGVQLTLEIGILTPQGLRTEPGR</sequence>
<protein>
    <recommendedName>
        <fullName evidence="1">UDP-N-acetylenolpyruvoylglucosamine reductase</fullName>
        <ecNumber evidence="1">1.3.1.98</ecNumber>
    </recommendedName>
    <alternativeName>
        <fullName evidence="1">UDP-N-acetylmuramate dehydrogenase</fullName>
    </alternativeName>
</protein>
<reference key="1">
    <citation type="journal article" date="2009" name="Appl. Environ. Microbiol.">
        <title>Complete genome sequence of the chemolithoautotrophic marine magnetotactic coccus strain MC-1.</title>
        <authorList>
            <person name="Schubbe S."/>
            <person name="Williams T.J."/>
            <person name="Xie G."/>
            <person name="Kiss H.E."/>
            <person name="Brettin T.S."/>
            <person name="Martinez D."/>
            <person name="Ross C.A."/>
            <person name="Schuler D."/>
            <person name="Cox B.L."/>
            <person name="Nealson K.H."/>
            <person name="Bazylinski D.A."/>
        </authorList>
    </citation>
    <scope>NUCLEOTIDE SEQUENCE [LARGE SCALE GENOMIC DNA]</scope>
    <source>
        <strain>ATCC BAA-1437 / JCM 17883 / MC-1</strain>
    </source>
</reference>
<gene>
    <name evidence="1" type="primary">murB</name>
    <name type="ordered locus">Mmc1_0751</name>
</gene>
<name>MURB_MAGMM</name>
<comment type="function">
    <text evidence="1">Cell wall formation.</text>
</comment>
<comment type="catalytic activity">
    <reaction evidence="1">
        <text>UDP-N-acetyl-alpha-D-muramate + NADP(+) = UDP-N-acetyl-3-O-(1-carboxyvinyl)-alpha-D-glucosamine + NADPH + H(+)</text>
        <dbReference type="Rhea" id="RHEA:12248"/>
        <dbReference type="ChEBI" id="CHEBI:15378"/>
        <dbReference type="ChEBI" id="CHEBI:57783"/>
        <dbReference type="ChEBI" id="CHEBI:58349"/>
        <dbReference type="ChEBI" id="CHEBI:68483"/>
        <dbReference type="ChEBI" id="CHEBI:70757"/>
        <dbReference type="EC" id="1.3.1.98"/>
    </reaction>
</comment>
<comment type="cofactor">
    <cofactor evidence="1">
        <name>FAD</name>
        <dbReference type="ChEBI" id="CHEBI:57692"/>
    </cofactor>
</comment>
<comment type="pathway">
    <text evidence="1">Cell wall biogenesis; peptidoglycan biosynthesis.</text>
</comment>
<comment type="subcellular location">
    <subcellularLocation>
        <location evidence="1">Cytoplasm</location>
    </subcellularLocation>
</comment>
<comment type="similarity">
    <text evidence="1">Belongs to the MurB family.</text>
</comment>
<dbReference type="EC" id="1.3.1.98" evidence="1"/>
<dbReference type="EMBL" id="CP000471">
    <property type="protein sequence ID" value="ABK43272.1"/>
    <property type="molecule type" value="Genomic_DNA"/>
</dbReference>
<dbReference type="RefSeq" id="WP_011712432.1">
    <property type="nucleotide sequence ID" value="NC_008576.1"/>
</dbReference>
<dbReference type="SMR" id="A0L5M9"/>
<dbReference type="STRING" id="156889.Mmc1_0751"/>
<dbReference type="KEGG" id="mgm:Mmc1_0751"/>
<dbReference type="eggNOG" id="COG0812">
    <property type="taxonomic scope" value="Bacteria"/>
</dbReference>
<dbReference type="HOGENOM" id="CLU_035304_1_0_5"/>
<dbReference type="OrthoDB" id="9804753at2"/>
<dbReference type="UniPathway" id="UPA00219"/>
<dbReference type="Proteomes" id="UP000002586">
    <property type="component" value="Chromosome"/>
</dbReference>
<dbReference type="GO" id="GO:0005829">
    <property type="term" value="C:cytosol"/>
    <property type="evidence" value="ECO:0007669"/>
    <property type="project" value="TreeGrafter"/>
</dbReference>
<dbReference type="GO" id="GO:0071949">
    <property type="term" value="F:FAD binding"/>
    <property type="evidence" value="ECO:0007669"/>
    <property type="project" value="InterPro"/>
</dbReference>
<dbReference type="GO" id="GO:0008762">
    <property type="term" value="F:UDP-N-acetylmuramate dehydrogenase activity"/>
    <property type="evidence" value="ECO:0007669"/>
    <property type="project" value="UniProtKB-UniRule"/>
</dbReference>
<dbReference type="GO" id="GO:0051301">
    <property type="term" value="P:cell division"/>
    <property type="evidence" value="ECO:0007669"/>
    <property type="project" value="UniProtKB-KW"/>
</dbReference>
<dbReference type="GO" id="GO:0071555">
    <property type="term" value="P:cell wall organization"/>
    <property type="evidence" value="ECO:0007669"/>
    <property type="project" value="UniProtKB-KW"/>
</dbReference>
<dbReference type="GO" id="GO:0009252">
    <property type="term" value="P:peptidoglycan biosynthetic process"/>
    <property type="evidence" value="ECO:0007669"/>
    <property type="project" value="UniProtKB-UniRule"/>
</dbReference>
<dbReference type="GO" id="GO:0008360">
    <property type="term" value="P:regulation of cell shape"/>
    <property type="evidence" value="ECO:0007669"/>
    <property type="project" value="UniProtKB-KW"/>
</dbReference>
<dbReference type="Gene3D" id="3.30.465.10">
    <property type="match status" value="1"/>
</dbReference>
<dbReference type="Gene3D" id="3.90.78.10">
    <property type="entry name" value="UDP-N-acetylenolpyruvoylglucosamine reductase, C-terminal domain"/>
    <property type="match status" value="1"/>
</dbReference>
<dbReference type="Gene3D" id="3.30.43.10">
    <property type="entry name" value="Uridine Diphospho-n-acetylenolpyruvylglucosamine Reductase, domain 2"/>
    <property type="match status" value="1"/>
</dbReference>
<dbReference type="HAMAP" id="MF_00037">
    <property type="entry name" value="MurB"/>
    <property type="match status" value="1"/>
</dbReference>
<dbReference type="InterPro" id="IPR016166">
    <property type="entry name" value="FAD-bd_PCMH"/>
</dbReference>
<dbReference type="InterPro" id="IPR036318">
    <property type="entry name" value="FAD-bd_PCMH-like_sf"/>
</dbReference>
<dbReference type="InterPro" id="IPR016167">
    <property type="entry name" value="FAD-bd_PCMH_sub1"/>
</dbReference>
<dbReference type="InterPro" id="IPR016169">
    <property type="entry name" value="FAD-bd_PCMH_sub2"/>
</dbReference>
<dbReference type="InterPro" id="IPR003170">
    <property type="entry name" value="MurB"/>
</dbReference>
<dbReference type="InterPro" id="IPR011601">
    <property type="entry name" value="MurB_C"/>
</dbReference>
<dbReference type="InterPro" id="IPR036635">
    <property type="entry name" value="MurB_C_sf"/>
</dbReference>
<dbReference type="InterPro" id="IPR006094">
    <property type="entry name" value="Oxid_FAD_bind_N"/>
</dbReference>
<dbReference type="NCBIfam" id="TIGR00179">
    <property type="entry name" value="murB"/>
    <property type="match status" value="1"/>
</dbReference>
<dbReference type="NCBIfam" id="NF010480">
    <property type="entry name" value="PRK13905.1"/>
    <property type="match status" value="1"/>
</dbReference>
<dbReference type="PANTHER" id="PTHR21071">
    <property type="entry name" value="UDP-N-ACETYLENOLPYRUVOYLGLUCOSAMINE REDUCTASE"/>
    <property type="match status" value="1"/>
</dbReference>
<dbReference type="PANTHER" id="PTHR21071:SF4">
    <property type="entry name" value="UDP-N-ACETYLENOLPYRUVOYLGLUCOSAMINE REDUCTASE"/>
    <property type="match status" value="1"/>
</dbReference>
<dbReference type="Pfam" id="PF01565">
    <property type="entry name" value="FAD_binding_4"/>
    <property type="match status" value="1"/>
</dbReference>
<dbReference type="Pfam" id="PF02873">
    <property type="entry name" value="MurB_C"/>
    <property type="match status" value="1"/>
</dbReference>
<dbReference type="SUPFAM" id="SSF56176">
    <property type="entry name" value="FAD-binding/transporter-associated domain-like"/>
    <property type="match status" value="1"/>
</dbReference>
<dbReference type="SUPFAM" id="SSF56194">
    <property type="entry name" value="Uridine diphospho-N-Acetylenolpyruvylglucosamine reductase, MurB, C-terminal domain"/>
    <property type="match status" value="1"/>
</dbReference>
<dbReference type="PROSITE" id="PS51387">
    <property type="entry name" value="FAD_PCMH"/>
    <property type="match status" value="1"/>
</dbReference>
<proteinExistence type="inferred from homology"/>
<accession>A0L5M9</accession>
<evidence type="ECO:0000255" key="1">
    <source>
        <dbReference type="HAMAP-Rule" id="MF_00037"/>
    </source>
</evidence>